<feature type="chain" id="PRO_0000187180" description="2-dehydro-3-deoxyphosphooctonate aldolase">
    <location>
        <begin position="1"/>
        <end position="290"/>
    </location>
</feature>
<evidence type="ECO:0000250" key="1"/>
<evidence type="ECO:0000250" key="2">
    <source>
        <dbReference type="UniProtKB" id="Q9AV97"/>
    </source>
</evidence>
<evidence type="ECO:0000305" key="3"/>
<sequence length="290" mass="31723">MDPSVLLYNQLKAADPFFLLAGPNVIESEEHIMRMAKHIKTISSKFGIPLIFKSSFDKANRTSSKSFRGPGIVEGLKILEKVKIAYDIPIVTDVHEASQCEPVGRVADIIQIPAFLCRQTDLLVAAAKTGKIINIKKGQFCAPSVMANSAEKVRLAGNPNVMVCERGTMFGYNDLIVDPRNLEWMREANCPVVADITHSLQQPAGKKLDGGGVASGGLRELIPCIARTSVAVGVDGIFMEVHDDPLNAPVDGPTQWPLRHLEELLEELIAISRVSKGKKPFNIDLTPFRE</sequence>
<accession>O50044</accession>
<gene>
    <name type="primary">KDSA</name>
</gene>
<keyword id="KW-0963">Cytoplasm</keyword>
<keyword id="KW-0808">Transferase</keyword>
<proteinExistence type="evidence at transcript level"/>
<reference key="1">
    <citation type="journal article" date="2000" name="Planta">
        <title>A cDNA encoding 3-deoxy-D-manno-oct-2-ulosonate-8-phosphate synthase of Pisum sativum L. (pea) functionally complements a kdsA mutant of the Gram-negative bacterium Salmonella enterica.</title>
        <authorList>
            <person name="Brabetz W."/>
            <person name="Wolter F.P."/>
            <person name="Brade H."/>
        </authorList>
    </citation>
    <scope>NUCLEOTIDE SEQUENCE [MRNA]</scope>
    <source>
        <strain>cv. Die kleine Rheinlaenderin</strain>
    </source>
</reference>
<protein>
    <recommendedName>
        <fullName>2-dehydro-3-deoxyphosphooctonate aldolase</fullName>
        <ecNumber evidence="2">2.5.1.55</ecNumber>
    </recommendedName>
    <alternativeName>
        <fullName>3-deoxy-D-manno-octulosonic acid 8-phosphate synthase</fullName>
    </alternativeName>
    <alternativeName>
        <fullName>KDO-8-phosphate synthase</fullName>
        <shortName>KDO 8-P synthase</shortName>
        <shortName>KDOPS</shortName>
    </alternativeName>
    <alternativeName>
        <fullName>Phospho-2-dehydro-3-deoxyoctonate aldolase</fullName>
    </alternativeName>
</protein>
<organism>
    <name type="scientific">Pisum sativum</name>
    <name type="common">Garden pea</name>
    <name type="synonym">Lathyrus oleraceus</name>
    <dbReference type="NCBI Taxonomy" id="3888"/>
    <lineage>
        <taxon>Eukaryota</taxon>
        <taxon>Viridiplantae</taxon>
        <taxon>Streptophyta</taxon>
        <taxon>Embryophyta</taxon>
        <taxon>Tracheophyta</taxon>
        <taxon>Spermatophyta</taxon>
        <taxon>Magnoliopsida</taxon>
        <taxon>eudicotyledons</taxon>
        <taxon>Gunneridae</taxon>
        <taxon>Pentapetalae</taxon>
        <taxon>rosids</taxon>
        <taxon>fabids</taxon>
        <taxon>Fabales</taxon>
        <taxon>Fabaceae</taxon>
        <taxon>Papilionoideae</taxon>
        <taxon>50 kb inversion clade</taxon>
        <taxon>NPAAA clade</taxon>
        <taxon>Hologalegina</taxon>
        <taxon>IRL clade</taxon>
        <taxon>Fabeae</taxon>
        <taxon>Pisum</taxon>
    </lineage>
</organism>
<comment type="catalytic activity">
    <reaction evidence="2">
        <text>D-arabinose 5-phosphate + phosphoenolpyruvate + H2O = 3-deoxy-alpha-D-manno-2-octulosonate-8-phosphate + phosphate</text>
        <dbReference type="Rhea" id="RHEA:14053"/>
        <dbReference type="ChEBI" id="CHEBI:15377"/>
        <dbReference type="ChEBI" id="CHEBI:43474"/>
        <dbReference type="ChEBI" id="CHEBI:57693"/>
        <dbReference type="ChEBI" id="CHEBI:58702"/>
        <dbReference type="ChEBI" id="CHEBI:85985"/>
        <dbReference type="EC" id="2.5.1.55"/>
    </reaction>
</comment>
<comment type="subcellular location">
    <subcellularLocation>
        <location evidence="1">Cytoplasm</location>
    </subcellularLocation>
</comment>
<comment type="similarity">
    <text evidence="3">Belongs to the KdsA family.</text>
</comment>
<name>KDSA_PEA</name>
<dbReference type="EC" id="2.5.1.55" evidence="2"/>
<dbReference type="EMBL" id="Y14273">
    <property type="protein sequence ID" value="CAA74645.1"/>
    <property type="molecule type" value="mRNA"/>
</dbReference>
<dbReference type="EMBL" id="Y14272">
    <property type="protein sequence ID" value="CAA74644.1"/>
    <property type="molecule type" value="mRNA"/>
</dbReference>
<dbReference type="PIR" id="T06816">
    <property type="entry name" value="T06816"/>
</dbReference>
<dbReference type="SMR" id="O50044"/>
<dbReference type="EnsemblPlants" id="Psat3g099560.1">
    <property type="protein sequence ID" value="Psat3g099560.1.cds"/>
    <property type="gene ID" value="Psat3g099560"/>
</dbReference>
<dbReference type="Gramene" id="Psat3g099560.1">
    <property type="protein sequence ID" value="Psat3g099560.1.cds"/>
    <property type="gene ID" value="Psat3g099560"/>
</dbReference>
<dbReference type="OrthoDB" id="2013945at2759"/>
<dbReference type="GO" id="GO:0005737">
    <property type="term" value="C:cytoplasm"/>
    <property type="evidence" value="ECO:0007669"/>
    <property type="project" value="UniProtKB-SubCell"/>
</dbReference>
<dbReference type="GO" id="GO:0008676">
    <property type="term" value="F:3-deoxy-8-phosphooctulonate synthase activity"/>
    <property type="evidence" value="ECO:0007669"/>
    <property type="project" value="UniProtKB-EC"/>
</dbReference>
<dbReference type="GO" id="GO:0009058">
    <property type="term" value="P:biosynthetic process"/>
    <property type="evidence" value="ECO:0007669"/>
    <property type="project" value="InterPro"/>
</dbReference>
<dbReference type="Gene3D" id="3.20.20.70">
    <property type="entry name" value="Aldolase class I"/>
    <property type="match status" value="1"/>
</dbReference>
<dbReference type="HAMAP" id="MF_00056">
    <property type="entry name" value="KDO8P_synth"/>
    <property type="match status" value="1"/>
</dbReference>
<dbReference type="InterPro" id="IPR013785">
    <property type="entry name" value="Aldolase_TIM"/>
</dbReference>
<dbReference type="InterPro" id="IPR006218">
    <property type="entry name" value="DAHP1/KDSA"/>
</dbReference>
<dbReference type="InterPro" id="IPR006269">
    <property type="entry name" value="KDO8P_synthase"/>
</dbReference>
<dbReference type="NCBIfam" id="TIGR01362">
    <property type="entry name" value="KDO8P_synth"/>
    <property type="match status" value="1"/>
</dbReference>
<dbReference type="NCBIfam" id="NF003543">
    <property type="entry name" value="PRK05198.1"/>
    <property type="match status" value="1"/>
</dbReference>
<dbReference type="PANTHER" id="PTHR21057">
    <property type="entry name" value="PHOSPHO-2-DEHYDRO-3-DEOXYHEPTONATE ALDOLASE"/>
    <property type="match status" value="1"/>
</dbReference>
<dbReference type="Pfam" id="PF00793">
    <property type="entry name" value="DAHP_synth_1"/>
    <property type="match status" value="1"/>
</dbReference>
<dbReference type="SUPFAM" id="SSF51569">
    <property type="entry name" value="Aldolase"/>
    <property type="match status" value="1"/>
</dbReference>